<reference key="1">
    <citation type="journal article" date="2005" name="J. Bacteriol.">
        <title>Swine and poultry pathogens: the complete genome sequences of two strains of Mycoplasma hyopneumoniae and a strain of Mycoplasma synoviae.</title>
        <authorList>
            <person name="Vasconcelos A.T.R."/>
            <person name="Ferreira H.B."/>
            <person name="Bizarro C.V."/>
            <person name="Bonatto S.L."/>
            <person name="Carvalho M.O."/>
            <person name="Pinto P.M."/>
            <person name="Almeida D.F."/>
            <person name="Almeida L.G.P."/>
            <person name="Almeida R."/>
            <person name="Alves-Junior L."/>
            <person name="Assuncao E.N."/>
            <person name="Azevedo V.A.C."/>
            <person name="Bogo M.R."/>
            <person name="Brigido M.M."/>
            <person name="Brocchi M."/>
            <person name="Burity H.A."/>
            <person name="Camargo A.A."/>
            <person name="Camargo S.S."/>
            <person name="Carepo M.S."/>
            <person name="Carraro D.M."/>
            <person name="de Mattos Cascardo J.C."/>
            <person name="Castro L.A."/>
            <person name="Cavalcanti G."/>
            <person name="Chemale G."/>
            <person name="Collevatti R.G."/>
            <person name="Cunha C.W."/>
            <person name="Dallagiovanna B."/>
            <person name="Dambros B.P."/>
            <person name="Dellagostin O.A."/>
            <person name="Falcao C."/>
            <person name="Fantinatti-Garboggini F."/>
            <person name="Felipe M.S.S."/>
            <person name="Fiorentin L."/>
            <person name="Franco G.R."/>
            <person name="Freitas N.S.A."/>
            <person name="Frias D."/>
            <person name="Grangeiro T.B."/>
            <person name="Grisard E.C."/>
            <person name="Guimaraes C.T."/>
            <person name="Hungria M."/>
            <person name="Jardim S.N."/>
            <person name="Krieger M.A."/>
            <person name="Laurino J.P."/>
            <person name="Lima L.F.A."/>
            <person name="Lopes M.I."/>
            <person name="Loreto E.L.S."/>
            <person name="Madeira H.M.F."/>
            <person name="Manfio G.P."/>
            <person name="Maranhao A.Q."/>
            <person name="Martinkovics C.T."/>
            <person name="Medeiros S.R.B."/>
            <person name="Moreira M.A.M."/>
            <person name="Neiva M."/>
            <person name="Ramalho-Neto C.E."/>
            <person name="Nicolas M.F."/>
            <person name="Oliveira S.C."/>
            <person name="Paixao R.F.C."/>
            <person name="Pedrosa F.O."/>
            <person name="Pena S.D.J."/>
            <person name="Pereira M."/>
            <person name="Pereira-Ferrari L."/>
            <person name="Piffer I."/>
            <person name="Pinto L.S."/>
            <person name="Potrich D.P."/>
            <person name="Salim A.C.M."/>
            <person name="Santos F.R."/>
            <person name="Schmitt R."/>
            <person name="Schneider M.P.C."/>
            <person name="Schrank A."/>
            <person name="Schrank I.S."/>
            <person name="Schuck A.F."/>
            <person name="Seuanez H.N."/>
            <person name="Silva D.W."/>
            <person name="Silva R."/>
            <person name="Silva S.C."/>
            <person name="Soares C.M.A."/>
            <person name="Souza K.R.L."/>
            <person name="Souza R.C."/>
            <person name="Staats C.C."/>
            <person name="Steffens M.B.R."/>
            <person name="Teixeira S.M.R."/>
            <person name="Urmenyi T.P."/>
            <person name="Vainstein M.H."/>
            <person name="Zuccherato L.W."/>
            <person name="Simpson A.J.G."/>
            <person name="Zaha A."/>
        </authorList>
    </citation>
    <scope>NUCLEOTIDE SEQUENCE [LARGE SCALE GENOMIC DNA]</scope>
    <source>
        <strain>J / ATCC 25934 / NCTC 10110</strain>
    </source>
</reference>
<organism>
    <name type="scientific">Mesomycoplasma hyopneumoniae (strain J / ATCC 25934 / NCTC 10110)</name>
    <name type="common">Mycoplasma hyopneumoniae</name>
    <dbReference type="NCBI Taxonomy" id="262719"/>
    <lineage>
        <taxon>Bacteria</taxon>
        <taxon>Bacillati</taxon>
        <taxon>Mycoplasmatota</taxon>
        <taxon>Mycoplasmoidales</taxon>
        <taxon>Metamycoplasmataceae</taxon>
        <taxon>Mesomycoplasma</taxon>
    </lineage>
</organism>
<dbReference type="EC" id="3.6.5.-" evidence="1"/>
<dbReference type="EMBL" id="AE017243">
    <property type="protein sequence ID" value="AAZ44131.1"/>
    <property type="molecule type" value="Genomic_DNA"/>
</dbReference>
<dbReference type="RefSeq" id="WP_011283858.1">
    <property type="nucleotide sequence ID" value="NC_007295.1"/>
</dbReference>
<dbReference type="SMR" id="Q4AAV4"/>
<dbReference type="GeneID" id="41334325"/>
<dbReference type="KEGG" id="mhj:MHJ_0037"/>
<dbReference type="eggNOG" id="COG0536">
    <property type="taxonomic scope" value="Bacteria"/>
</dbReference>
<dbReference type="HOGENOM" id="CLU_011747_2_1_14"/>
<dbReference type="OrthoDB" id="9807318at2"/>
<dbReference type="Proteomes" id="UP000000548">
    <property type="component" value="Chromosome"/>
</dbReference>
<dbReference type="GO" id="GO:0005737">
    <property type="term" value="C:cytoplasm"/>
    <property type="evidence" value="ECO:0007669"/>
    <property type="project" value="UniProtKB-SubCell"/>
</dbReference>
<dbReference type="GO" id="GO:0005525">
    <property type="term" value="F:GTP binding"/>
    <property type="evidence" value="ECO:0007669"/>
    <property type="project" value="UniProtKB-UniRule"/>
</dbReference>
<dbReference type="GO" id="GO:0003924">
    <property type="term" value="F:GTPase activity"/>
    <property type="evidence" value="ECO:0007669"/>
    <property type="project" value="UniProtKB-UniRule"/>
</dbReference>
<dbReference type="GO" id="GO:0000287">
    <property type="term" value="F:magnesium ion binding"/>
    <property type="evidence" value="ECO:0007669"/>
    <property type="project" value="InterPro"/>
</dbReference>
<dbReference type="GO" id="GO:0042254">
    <property type="term" value="P:ribosome biogenesis"/>
    <property type="evidence" value="ECO:0007669"/>
    <property type="project" value="UniProtKB-UniRule"/>
</dbReference>
<dbReference type="CDD" id="cd01898">
    <property type="entry name" value="Obg"/>
    <property type="match status" value="1"/>
</dbReference>
<dbReference type="FunFam" id="2.70.210.12:FF:000001">
    <property type="entry name" value="GTPase Obg"/>
    <property type="match status" value="1"/>
</dbReference>
<dbReference type="Gene3D" id="3.30.300.350">
    <property type="entry name" value="GTP-binding protein OBG, C-terminal domain"/>
    <property type="match status" value="1"/>
</dbReference>
<dbReference type="Gene3D" id="2.70.210.12">
    <property type="entry name" value="GTP1/OBG domain"/>
    <property type="match status" value="1"/>
</dbReference>
<dbReference type="Gene3D" id="3.40.50.300">
    <property type="entry name" value="P-loop containing nucleotide triphosphate hydrolases"/>
    <property type="match status" value="1"/>
</dbReference>
<dbReference type="HAMAP" id="MF_01454">
    <property type="entry name" value="GTPase_Obg"/>
    <property type="match status" value="1"/>
</dbReference>
<dbReference type="InterPro" id="IPR031167">
    <property type="entry name" value="G_OBG"/>
</dbReference>
<dbReference type="InterPro" id="IPR006073">
    <property type="entry name" value="GTP-bd"/>
</dbReference>
<dbReference type="InterPro" id="IPR014100">
    <property type="entry name" value="GTP-bd_Obg/CgtA"/>
</dbReference>
<dbReference type="InterPro" id="IPR036346">
    <property type="entry name" value="GTP-bd_prot_GTP1/OBG_C_sf"/>
</dbReference>
<dbReference type="InterPro" id="IPR006074">
    <property type="entry name" value="GTP1-OBG_CS"/>
</dbReference>
<dbReference type="InterPro" id="IPR006169">
    <property type="entry name" value="GTP1_OBG_dom"/>
</dbReference>
<dbReference type="InterPro" id="IPR036726">
    <property type="entry name" value="GTP1_OBG_dom_sf"/>
</dbReference>
<dbReference type="InterPro" id="IPR045086">
    <property type="entry name" value="OBG_GTPase"/>
</dbReference>
<dbReference type="InterPro" id="IPR015349">
    <property type="entry name" value="OCT_dom"/>
</dbReference>
<dbReference type="InterPro" id="IPR027417">
    <property type="entry name" value="P-loop_NTPase"/>
</dbReference>
<dbReference type="NCBIfam" id="TIGR02729">
    <property type="entry name" value="Obg_CgtA"/>
    <property type="match status" value="1"/>
</dbReference>
<dbReference type="NCBIfam" id="TIGR03595">
    <property type="entry name" value="Obg_CgtA_exten"/>
    <property type="match status" value="1"/>
</dbReference>
<dbReference type="NCBIfam" id="NF008955">
    <property type="entry name" value="PRK12297.1"/>
    <property type="match status" value="1"/>
</dbReference>
<dbReference type="NCBIfam" id="NF008956">
    <property type="entry name" value="PRK12299.1"/>
    <property type="match status" value="1"/>
</dbReference>
<dbReference type="PANTHER" id="PTHR11702">
    <property type="entry name" value="DEVELOPMENTALLY REGULATED GTP-BINDING PROTEIN-RELATED"/>
    <property type="match status" value="1"/>
</dbReference>
<dbReference type="PANTHER" id="PTHR11702:SF31">
    <property type="entry name" value="MITOCHONDRIAL RIBOSOME-ASSOCIATED GTPASE 2"/>
    <property type="match status" value="1"/>
</dbReference>
<dbReference type="Pfam" id="PF09269">
    <property type="entry name" value="DUF1967"/>
    <property type="match status" value="1"/>
</dbReference>
<dbReference type="Pfam" id="PF01018">
    <property type="entry name" value="GTP1_OBG"/>
    <property type="match status" value="1"/>
</dbReference>
<dbReference type="Pfam" id="PF01926">
    <property type="entry name" value="MMR_HSR1"/>
    <property type="match status" value="1"/>
</dbReference>
<dbReference type="PIRSF" id="PIRSF002401">
    <property type="entry name" value="GTP_bd_Obg/CgtA"/>
    <property type="match status" value="1"/>
</dbReference>
<dbReference type="PRINTS" id="PR00326">
    <property type="entry name" value="GTP1OBG"/>
</dbReference>
<dbReference type="SUPFAM" id="SSF102741">
    <property type="entry name" value="Obg GTP-binding protein C-terminal domain"/>
    <property type="match status" value="1"/>
</dbReference>
<dbReference type="SUPFAM" id="SSF82051">
    <property type="entry name" value="Obg GTP-binding protein N-terminal domain"/>
    <property type="match status" value="1"/>
</dbReference>
<dbReference type="SUPFAM" id="SSF52540">
    <property type="entry name" value="P-loop containing nucleoside triphosphate hydrolases"/>
    <property type="match status" value="1"/>
</dbReference>
<dbReference type="PROSITE" id="PS51710">
    <property type="entry name" value="G_OBG"/>
    <property type="match status" value="1"/>
</dbReference>
<dbReference type="PROSITE" id="PS00905">
    <property type="entry name" value="GTP1_OBG"/>
    <property type="match status" value="1"/>
</dbReference>
<dbReference type="PROSITE" id="PS51883">
    <property type="entry name" value="OBG"/>
    <property type="match status" value="1"/>
</dbReference>
<dbReference type="PROSITE" id="PS51881">
    <property type="entry name" value="OCT"/>
    <property type="match status" value="1"/>
</dbReference>
<evidence type="ECO:0000255" key="1">
    <source>
        <dbReference type="HAMAP-Rule" id="MF_01454"/>
    </source>
</evidence>
<evidence type="ECO:0000255" key="2">
    <source>
        <dbReference type="PROSITE-ProRule" id="PRU01229"/>
    </source>
</evidence>
<evidence type="ECO:0000255" key="3">
    <source>
        <dbReference type="PROSITE-ProRule" id="PRU01231"/>
    </source>
</evidence>
<comment type="function">
    <text evidence="1">An essential GTPase which binds GTP, GDP and possibly (p)ppGpp with moderate affinity, with high nucleotide exchange rates and a fairly low GTP hydrolysis rate. Plays a role in control of the cell cycle, stress response, ribosome biogenesis and in those bacteria that undergo differentiation, in morphogenesis control.</text>
</comment>
<comment type="cofactor">
    <cofactor evidence="1">
        <name>Mg(2+)</name>
        <dbReference type="ChEBI" id="CHEBI:18420"/>
    </cofactor>
</comment>
<comment type="subunit">
    <text evidence="1">Monomer.</text>
</comment>
<comment type="subcellular location">
    <subcellularLocation>
        <location evidence="1">Cytoplasm</location>
    </subcellularLocation>
</comment>
<comment type="similarity">
    <text evidence="1">Belongs to the TRAFAC class OBG-HflX-like GTPase superfamily. OBG GTPase family.</text>
</comment>
<sequence>MRFVDYVSIEVVAGKGGDGIISFRREAHVDKGGPDGGDGGWGGSIYFVGDSGMNTLLPFYQTKKIFGYNGENGRPKRQTGANGKDIFIKVPLGTQVFLKKSLICDIILEKKYLIAKGGRGGLGNFHFRNSKNKAPRISENGELGQNFYLDLQLKVMADIGLVGKPNAGKSTLLSLISNSKPKIANYEFTTLAPQLGVVKIYENSFVTADLPGLIQGASSGKGMGIIFLKHIERCRAIVHVIDFGSDNKNPIKDFIEIKSELEKFNKKLLDLNQIVIANKCDLPNFQFNLANFKRKFPKIKIIKSSLISAKQNEINIIKEKMFGLLGEKQKKLEIQEINTSKIEFNLKAPFLIKSRNNGFFEITGELIQKIIQKIPLNSQENILRFNAKVKKIGLWDELIKKGIKPGDLVRIYEFEFHWN</sequence>
<name>OBG_MESHJ</name>
<feature type="chain" id="PRO_0000386072" description="GTPase Obg">
    <location>
        <begin position="1"/>
        <end position="419"/>
    </location>
</feature>
<feature type="domain" description="Obg" evidence="3">
    <location>
        <begin position="1"/>
        <end position="156"/>
    </location>
</feature>
<feature type="domain" description="OBG-type G" evidence="1">
    <location>
        <begin position="157"/>
        <end position="334"/>
    </location>
</feature>
<feature type="domain" description="OCT" evidence="2">
    <location>
        <begin position="342"/>
        <end position="419"/>
    </location>
</feature>
<feature type="binding site" evidence="1">
    <location>
        <begin position="163"/>
        <end position="170"/>
    </location>
    <ligand>
        <name>GTP</name>
        <dbReference type="ChEBI" id="CHEBI:37565"/>
    </ligand>
</feature>
<feature type="binding site" evidence="1">
    <location>
        <position position="170"/>
    </location>
    <ligand>
        <name>Mg(2+)</name>
        <dbReference type="ChEBI" id="CHEBI:18420"/>
    </ligand>
</feature>
<feature type="binding site" evidence="1">
    <location>
        <begin position="188"/>
        <end position="192"/>
    </location>
    <ligand>
        <name>GTP</name>
        <dbReference type="ChEBI" id="CHEBI:37565"/>
    </ligand>
</feature>
<feature type="binding site" evidence="1">
    <location>
        <position position="190"/>
    </location>
    <ligand>
        <name>Mg(2+)</name>
        <dbReference type="ChEBI" id="CHEBI:18420"/>
    </ligand>
</feature>
<feature type="binding site" evidence="1">
    <location>
        <begin position="209"/>
        <end position="212"/>
    </location>
    <ligand>
        <name>GTP</name>
        <dbReference type="ChEBI" id="CHEBI:37565"/>
    </ligand>
</feature>
<feature type="binding site" evidence="1">
    <location>
        <begin position="278"/>
        <end position="281"/>
    </location>
    <ligand>
        <name>GTP</name>
        <dbReference type="ChEBI" id="CHEBI:37565"/>
    </ligand>
</feature>
<feature type="binding site" evidence="1">
    <location>
        <begin position="315"/>
        <end position="317"/>
    </location>
    <ligand>
        <name>GTP</name>
        <dbReference type="ChEBI" id="CHEBI:37565"/>
    </ligand>
</feature>
<protein>
    <recommendedName>
        <fullName evidence="1">GTPase Obg</fullName>
        <ecNumber evidence="1">3.6.5.-</ecNumber>
    </recommendedName>
    <alternativeName>
        <fullName evidence="1">GTP-binding protein Obg</fullName>
    </alternativeName>
</protein>
<keyword id="KW-0963">Cytoplasm</keyword>
<keyword id="KW-0342">GTP-binding</keyword>
<keyword id="KW-0378">Hydrolase</keyword>
<keyword id="KW-0460">Magnesium</keyword>
<keyword id="KW-0479">Metal-binding</keyword>
<keyword id="KW-0547">Nucleotide-binding</keyword>
<proteinExistence type="inferred from homology"/>
<accession>Q4AAV4</accession>
<gene>
    <name evidence="1" type="primary">obg</name>
    <name type="ordered locus">MHJ_0037</name>
</gene>